<comment type="function">
    <text evidence="1">Plays a role in virus cell tropism, and may be required for efficient virus replication in macrophages.</text>
</comment>
<comment type="subcellular location">
    <subcellularLocation>
        <location evidence="3">Host membrane</location>
        <topology evidence="3">Single-pass membrane protein</topology>
    </subcellularLocation>
</comment>
<comment type="induction">
    <text evidence="3">Expressed in the early phase of the viral replicative cycle.</text>
</comment>
<comment type="similarity">
    <text evidence="3">Belongs to the asfivirus MGF 300 family.</text>
</comment>
<reference key="1">
    <citation type="submission" date="2003-03" db="EMBL/GenBank/DDBJ databases">
        <title>African swine fever virus genomes.</title>
        <authorList>
            <person name="Kutish G.F."/>
            <person name="Rock D.L."/>
        </authorList>
    </citation>
    <scope>NUCLEOTIDE SEQUENCE [LARGE SCALE GENOMIC DNA]</scope>
</reference>
<protein>
    <recommendedName>
        <fullName>Protein MGF 300-1L</fullName>
    </recommendedName>
</protein>
<feature type="chain" id="PRO_0000373227" description="Protein MGF 300-1L">
    <location>
        <begin position="1"/>
        <end position="268"/>
    </location>
</feature>
<feature type="topological domain" description="Cytoplasmic" evidence="2">
    <location>
        <begin position="1"/>
        <end position="175"/>
    </location>
</feature>
<feature type="transmembrane region" description="Helical" evidence="2">
    <location>
        <begin position="176"/>
        <end position="193"/>
    </location>
</feature>
<feature type="topological domain" description="Extracellular" evidence="2">
    <location>
        <begin position="194"/>
        <end position="268"/>
    </location>
</feature>
<accession>P0C9K4</accession>
<proteinExistence type="inferred from homology"/>
<name>3001L_ASFWA</name>
<dbReference type="EMBL" id="AY261366">
    <property type="status" value="NOT_ANNOTATED_CDS"/>
    <property type="molecule type" value="Genomic_DNA"/>
</dbReference>
<dbReference type="Proteomes" id="UP000000858">
    <property type="component" value="Segment"/>
</dbReference>
<dbReference type="GO" id="GO:0033644">
    <property type="term" value="C:host cell membrane"/>
    <property type="evidence" value="ECO:0007669"/>
    <property type="project" value="UniProtKB-SubCell"/>
</dbReference>
<dbReference type="GO" id="GO:0016020">
    <property type="term" value="C:membrane"/>
    <property type="evidence" value="ECO:0007669"/>
    <property type="project" value="UniProtKB-KW"/>
</dbReference>
<organismHost>
    <name type="scientific">Ornithodoros</name>
    <name type="common">relapsing fever ticks</name>
    <dbReference type="NCBI Taxonomy" id="6937"/>
</organismHost>
<organismHost>
    <name type="scientific">Phacochoerus aethiopicus</name>
    <name type="common">Warthog</name>
    <dbReference type="NCBI Taxonomy" id="85517"/>
</organismHost>
<organismHost>
    <name type="scientific">Phacochoerus africanus</name>
    <name type="common">Warthog</name>
    <dbReference type="NCBI Taxonomy" id="41426"/>
</organismHost>
<organismHost>
    <name type="scientific">Potamochoerus larvatus</name>
    <name type="common">Bushpig</name>
    <dbReference type="NCBI Taxonomy" id="273792"/>
</organismHost>
<organismHost>
    <name type="scientific">Sus scrofa</name>
    <name type="common">Pig</name>
    <dbReference type="NCBI Taxonomy" id="9823"/>
</organismHost>
<keyword id="KW-0244">Early protein</keyword>
<keyword id="KW-1043">Host membrane</keyword>
<keyword id="KW-0472">Membrane</keyword>
<keyword id="KW-0812">Transmembrane</keyword>
<keyword id="KW-1133">Transmembrane helix</keyword>
<gene>
    <name type="ordered locus">War-025</name>
</gene>
<sequence>MVSLTTCCLKNIVNQHAHVENTVLLYHLGLRWNCKTLYQCTQCNGINYTNSHSDQCKNKDLFLMKVIVKKNLAVARTLLSWGASPEYARLFCRNTEEEQALNVQHVADMSSSKILERLTMSYKENDEQLLITFYLLNLSTNFSTNLREQVRFNIVSYIICDLAIHQTFKTFYAKNYSLSTLYCIFLAIYYKLYTALRKMVKIYPGLKPFVYLTGFIFDDETVMETYNSTDDEISECKNRIIAIKGCYGNFHCRSDIDHMYAFSQNDYW</sequence>
<evidence type="ECO:0000250" key="1"/>
<evidence type="ECO:0000255" key="2"/>
<evidence type="ECO:0000305" key="3"/>
<organism>
    <name type="scientific">African swine fever virus (isolate Warthog/Namibia/Wart80/1980)</name>
    <name type="common">ASFV</name>
    <dbReference type="NCBI Taxonomy" id="561444"/>
    <lineage>
        <taxon>Viruses</taxon>
        <taxon>Varidnaviria</taxon>
        <taxon>Bamfordvirae</taxon>
        <taxon>Nucleocytoviricota</taxon>
        <taxon>Pokkesviricetes</taxon>
        <taxon>Asfuvirales</taxon>
        <taxon>Asfarviridae</taxon>
        <taxon>Asfivirus</taxon>
        <taxon>African swine fever virus</taxon>
    </lineage>
</organism>